<evidence type="ECO:0000255" key="1">
    <source>
        <dbReference type="HAMAP-Rule" id="MF_00570"/>
    </source>
</evidence>
<gene>
    <name evidence="1" type="primary">pncB</name>
    <name type="ordered locus">Bcen_0621</name>
</gene>
<feature type="chain" id="PRO_1000024997" description="Nicotinate phosphoribosyltransferase">
    <location>
        <begin position="1"/>
        <end position="399"/>
    </location>
</feature>
<feature type="modified residue" description="Phosphohistidine; by autocatalysis" evidence="1">
    <location>
        <position position="217"/>
    </location>
</feature>
<sequence length="399" mass="46002">MIITSLLDTDLYKFTMMQVVLHHFPAANVEYRFRCRTPGVDLVPYIDEIRDEVRGLCSLRFADVELDYLRRMRFIKSDFVDFLALFHLNEKYISITPSPKGNGEIDIVIEGPWLHTILFEIPVLAIVNEVYFRNTQREPDYREGRERLREKIKLLGAKPEFADCKIADYGTRRRFSKVWHEEVALTLRDGLGPQFAGTSNVLYAMKHDITPLGTMAHEYLQACQALGPRLRDSQIYGFEMWAKEYRGDLGIALSDVYGMDAFLNDFDMYFCKLFDGARHDSGDPFEWGERMLRHYEANRCDPRTKVLVFSDALDIPKVMQLYERFRGRCKLAFGVGTNLTNDLGYVPLQIVIKMVRCNGQPVAKLSDSPGKSMCDDKAYLAYLRQVFGIAQPVDEDASK</sequence>
<organism>
    <name type="scientific">Burkholderia orbicola (strain AU 1054)</name>
    <dbReference type="NCBI Taxonomy" id="331271"/>
    <lineage>
        <taxon>Bacteria</taxon>
        <taxon>Pseudomonadati</taxon>
        <taxon>Pseudomonadota</taxon>
        <taxon>Betaproteobacteria</taxon>
        <taxon>Burkholderiales</taxon>
        <taxon>Burkholderiaceae</taxon>
        <taxon>Burkholderia</taxon>
        <taxon>Burkholderia cepacia complex</taxon>
        <taxon>Burkholderia orbicola</taxon>
    </lineage>
</organism>
<reference key="1">
    <citation type="submission" date="2006-05" db="EMBL/GenBank/DDBJ databases">
        <title>Complete sequence of chromosome 1 of Burkholderia cenocepacia AU 1054.</title>
        <authorList>
            <consortium name="US DOE Joint Genome Institute"/>
            <person name="Copeland A."/>
            <person name="Lucas S."/>
            <person name="Lapidus A."/>
            <person name="Barry K."/>
            <person name="Detter J.C."/>
            <person name="Glavina del Rio T."/>
            <person name="Hammon N."/>
            <person name="Israni S."/>
            <person name="Dalin E."/>
            <person name="Tice H."/>
            <person name="Pitluck S."/>
            <person name="Chain P."/>
            <person name="Malfatti S."/>
            <person name="Shin M."/>
            <person name="Vergez L."/>
            <person name="Schmutz J."/>
            <person name="Larimer F."/>
            <person name="Land M."/>
            <person name="Hauser L."/>
            <person name="Kyrpides N."/>
            <person name="Lykidis A."/>
            <person name="LiPuma J.J."/>
            <person name="Konstantinidis K."/>
            <person name="Tiedje J.M."/>
            <person name="Richardson P."/>
        </authorList>
    </citation>
    <scope>NUCLEOTIDE SEQUENCE [LARGE SCALE GENOMIC DNA]</scope>
    <source>
        <strain>AU 1054</strain>
    </source>
</reference>
<name>PNCB_BURO1</name>
<protein>
    <recommendedName>
        <fullName evidence="1">Nicotinate phosphoribosyltransferase</fullName>
        <shortName evidence="1">NAPRTase</shortName>
        <ecNumber evidence="1">6.3.4.21</ecNumber>
    </recommendedName>
</protein>
<accession>Q1BXX4</accession>
<dbReference type="EC" id="6.3.4.21" evidence="1"/>
<dbReference type="EMBL" id="CP000378">
    <property type="protein sequence ID" value="ABF75531.1"/>
    <property type="molecule type" value="Genomic_DNA"/>
</dbReference>
<dbReference type="SMR" id="Q1BXX4"/>
<dbReference type="HOGENOM" id="CLU_030991_1_0_4"/>
<dbReference type="UniPathway" id="UPA00253">
    <property type="reaction ID" value="UER00457"/>
</dbReference>
<dbReference type="GO" id="GO:0005829">
    <property type="term" value="C:cytosol"/>
    <property type="evidence" value="ECO:0007669"/>
    <property type="project" value="TreeGrafter"/>
</dbReference>
<dbReference type="GO" id="GO:0004516">
    <property type="term" value="F:nicotinate phosphoribosyltransferase activity"/>
    <property type="evidence" value="ECO:0007669"/>
    <property type="project" value="UniProtKB-UniRule"/>
</dbReference>
<dbReference type="GO" id="GO:0034355">
    <property type="term" value="P:NAD biosynthetic process via the salvage pathway"/>
    <property type="evidence" value="ECO:0007669"/>
    <property type="project" value="TreeGrafter"/>
</dbReference>
<dbReference type="CDD" id="cd01401">
    <property type="entry name" value="PncB_like"/>
    <property type="match status" value="1"/>
</dbReference>
<dbReference type="Gene3D" id="3.20.140.10">
    <property type="entry name" value="nicotinate phosphoribosyltransferase"/>
    <property type="match status" value="1"/>
</dbReference>
<dbReference type="HAMAP" id="MF_00570">
    <property type="entry name" value="NAPRTase"/>
    <property type="match status" value="1"/>
</dbReference>
<dbReference type="InterPro" id="IPR041525">
    <property type="entry name" value="N/Namide_PRibTrfase"/>
</dbReference>
<dbReference type="InterPro" id="IPR040727">
    <property type="entry name" value="NAPRTase_N"/>
</dbReference>
<dbReference type="InterPro" id="IPR006406">
    <property type="entry name" value="Nic_PRibTrfase"/>
</dbReference>
<dbReference type="InterPro" id="IPR007229">
    <property type="entry name" value="Nic_PRibTrfase-Fam"/>
</dbReference>
<dbReference type="InterPro" id="IPR036068">
    <property type="entry name" value="Nicotinate_pribotase-like_C"/>
</dbReference>
<dbReference type="NCBIfam" id="TIGR01514">
    <property type="entry name" value="NAPRTase"/>
    <property type="match status" value="1"/>
</dbReference>
<dbReference type="NCBIfam" id="NF003704">
    <property type="entry name" value="PRK05321.1"/>
    <property type="match status" value="1"/>
</dbReference>
<dbReference type="PANTHER" id="PTHR11098">
    <property type="entry name" value="NICOTINATE PHOSPHORIBOSYLTRANSFERASE"/>
    <property type="match status" value="1"/>
</dbReference>
<dbReference type="PANTHER" id="PTHR11098:SF1">
    <property type="entry name" value="NICOTINATE PHOSPHORIBOSYLTRANSFERASE"/>
    <property type="match status" value="1"/>
</dbReference>
<dbReference type="Pfam" id="PF04095">
    <property type="entry name" value="NAPRTase"/>
    <property type="match status" value="1"/>
</dbReference>
<dbReference type="Pfam" id="PF17767">
    <property type="entry name" value="NAPRTase_N"/>
    <property type="match status" value="1"/>
</dbReference>
<dbReference type="PIRSF" id="PIRSF000484">
    <property type="entry name" value="NAPRT"/>
    <property type="match status" value="1"/>
</dbReference>
<dbReference type="SUPFAM" id="SSF51690">
    <property type="entry name" value="Nicotinate/Quinolinate PRTase C-terminal domain-like"/>
    <property type="match status" value="1"/>
</dbReference>
<dbReference type="SUPFAM" id="SSF54675">
    <property type="entry name" value="Nicotinate/Quinolinate PRTase N-terminal domain-like"/>
    <property type="match status" value="1"/>
</dbReference>
<keyword id="KW-0436">Ligase</keyword>
<keyword id="KW-0597">Phosphoprotein</keyword>
<keyword id="KW-0662">Pyridine nucleotide biosynthesis</keyword>
<comment type="function">
    <text evidence="1">Catalyzes the synthesis of beta-nicotinate D-ribonucleotide from nicotinate and 5-phospho-D-ribose 1-phosphate at the expense of ATP.</text>
</comment>
<comment type="catalytic activity">
    <reaction evidence="1">
        <text>nicotinate + 5-phospho-alpha-D-ribose 1-diphosphate + ATP + H2O = nicotinate beta-D-ribonucleotide + ADP + phosphate + diphosphate</text>
        <dbReference type="Rhea" id="RHEA:36163"/>
        <dbReference type="ChEBI" id="CHEBI:15377"/>
        <dbReference type="ChEBI" id="CHEBI:30616"/>
        <dbReference type="ChEBI" id="CHEBI:32544"/>
        <dbReference type="ChEBI" id="CHEBI:33019"/>
        <dbReference type="ChEBI" id="CHEBI:43474"/>
        <dbReference type="ChEBI" id="CHEBI:57502"/>
        <dbReference type="ChEBI" id="CHEBI:58017"/>
        <dbReference type="ChEBI" id="CHEBI:456216"/>
        <dbReference type="EC" id="6.3.4.21"/>
    </reaction>
</comment>
<comment type="pathway">
    <text evidence="1">Cofactor biosynthesis; NAD(+) biosynthesis; nicotinate D-ribonucleotide from nicotinate: step 1/1.</text>
</comment>
<comment type="PTM">
    <text evidence="1">Transiently phosphorylated on a His residue during the reaction cycle. Phosphorylation strongly increases the affinity for substrates and increases the rate of nicotinate D-ribonucleotide production. Dephosphorylation regenerates the low-affinity form of the enzyme, leading to product release.</text>
</comment>
<comment type="similarity">
    <text evidence="1">Belongs to the NAPRTase family.</text>
</comment>
<proteinExistence type="inferred from homology"/>